<reference key="1">
    <citation type="journal article" date="2009" name="PLoS ONE">
        <title>Genome sequence of the pathogenic intestinal spirochete Brachyspira hyodysenteriae reveals adaptations to its lifestyle in the porcine large intestine.</title>
        <authorList>
            <person name="Bellgard M.I."/>
            <person name="Wanchanthuek P."/>
            <person name="La T."/>
            <person name="Ryan K."/>
            <person name="Moolhuijzen P."/>
            <person name="Albertyn Z."/>
            <person name="Shaban B."/>
            <person name="Motro Y."/>
            <person name="Dunn D.S."/>
            <person name="Schibeci D."/>
            <person name="Hunter A."/>
            <person name="Barrero R."/>
            <person name="Phillips N.D."/>
            <person name="Hampson D.J."/>
        </authorList>
    </citation>
    <scope>NUCLEOTIDE SEQUENCE [LARGE SCALE GENOMIC DNA]</scope>
    <source>
        <strain>ATCC 49526 / WA1</strain>
    </source>
</reference>
<protein>
    <recommendedName>
        <fullName evidence="1">Large ribosomal subunit protein bL19</fullName>
    </recommendedName>
    <alternativeName>
        <fullName evidence="2">50S ribosomal protein L19</fullName>
    </alternativeName>
</protein>
<gene>
    <name evidence="1" type="primary">rplS</name>
    <name type="ordered locus">BHWA1_01570</name>
</gene>
<comment type="function">
    <text evidence="1">This protein is located at the 30S-50S ribosomal subunit interface and may play a role in the structure and function of the aminoacyl-tRNA binding site.</text>
</comment>
<comment type="similarity">
    <text evidence="1">Belongs to the bacterial ribosomal protein bL19 family.</text>
</comment>
<feature type="chain" id="PRO_1000134557" description="Large ribosomal subunit protein bL19">
    <location>
        <begin position="1"/>
        <end position="145"/>
    </location>
</feature>
<sequence length="145" mass="16563">MDQQIRLVEAKYKKEAILPFEIGDTVKVWVKIIEGDRERLQAYEGTVISIRGKGINKSFIVRKISYGVGVERIFLLNSPRIDHVDIIRKAKVRRAKLYYLRNKVGKKARLVERLGVKIPKHSDLIKNTTEENASAAEENNSSSAE</sequence>
<keyword id="KW-0687">Ribonucleoprotein</keyword>
<keyword id="KW-0689">Ribosomal protein</keyword>
<accession>C0R1Q2</accession>
<organism>
    <name type="scientific">Brachyspira hyodysenteriae (strain ATCC 49526 / WA1)</name>
    <dbReference type="NCBI Taxonomy" id="565034"/>
    <lineage>
        <taxon>Bacteria</taxon>
        <taxon>Pseudomonadati</taxon>
        <taxon>Spirochaetota</taxon>
        <taxon>Spirochaetia</taxon>
        <taxon>Brachyspirales</taxon>
        <taxon>Brachyspiraceae</taxon>
        <taxon>Brachyspira</taxon>
    </lineage>
</organism>
<dbReference type="EMBL" id="CP001357">
    <property type="protein sequence ID" value="ACN84040.1"/>
    <property type="molecule type" value="Genomic_DNA"/>
</dbReference>
<dbReference type="RefSeq" id="WP_012671082.1">
    <property type="nucleotide sequence ID" value="NC_012225.1"/>
</dbReference>
<dbReference type="SMR" id="C0R1Q2"/>
<dbReference type="STRING" id="565034.BHWA1_01570"/>
<dbReference type="GeneID" id="63962666"/>
<dbReference type="KEGG" id="bhy:BHWA1_01570"/>
<dbReference type="eggNOG" id="COG0335">
    <property type="taxonomic scope" value="Bacteria"/>
</dbReference>
<dbReference type="HOGENOM" id="CLU_103507_0_2_12"/>
<dbReference type="Proteomes" id="UP000001803">
    <property type="component" value="Chromosome"/>
</dbReference>
<dbReference type="GO" id="GO:0022625">
    <property type="term" value="C:cytosolic large ribosomal subunit"/>
    <property type="evidence" value="ECO:0007669"/>
    <property type="project" value="TreeGrafter"/>
</dbReference>
<dbReference type="GO" id="GO:0003735">
    <property type="term" value="F:structural constituent of ribosome"/>
    <property type="evidence" value="ECO:0007669"/>
    <property type="project" value="InterPro"/>
</dbReference>
<dbReference type="GO" id="GO:0006412">
    <property type="term" value="P:translation"/>
    <property type="evidence" value="ECO:0007669"/>
    <property type="project" value="UniProtKB-UniRule"/>
</dbReference>
<dbReference type="Gene3D" id="2.30.30.790">
    <property type="match status" value="1"/>
</dbReference>
<dbReference type="HAMAP" id="MF_00402">
    <property type="entry name" value="Ribosomal_bL19"/>
    <property type="match status" value="1"/>
</dbReference>
<dbReference type="InterPro" id="IPR001857">
    <property type="entry name" value="Ribosomal_bL19"/>
</dbReference>
<dbReference type="InterPro" id="IPR018257">
    <property type="entry name" value="Ribosomal_bL19_CS"/>
</dbReference>
<dbReference type="InterPro" id="IPR038657">
    <property type="entry name" value="Ribosomal_bL19_sf"/>
</dbReference>
<dbReference type="InterPro" id="IPR008991">
    <property type="entry name" value="Translation_prot_SH3-like_sf"/>
</dbReference>
<dbReference type="NCBIfam" id="TIGR01024">
    <property type="entry name" value="rplS_bact"/>
    <property type="match status" value="1"/>
</dbReference>
<dbReference type="PANTHER" id="PTHR15680:SF9">
    <property type="entry name" value="LARGE RIBOSOMAL SUBUNIT PROTEIN BL19M"/>
    <property type="match status" value="1"/>
</dbReference>
<dbReference type="PANTHER" id="PTHR15680">
    <property type="entry name" value="RIBOSOMAL PROTEIN L19"/>
    <property type="match status" value="1"/>
</dbReference>
<dbReference type="Pfam" id="PF01245">
    <property type="entry name" value="Ribosomal_L19"/>
    <property type="match status" value="1"/>
</dbReference>
<dbReference type="PRINTS" id="PR00061">
    <property type="entry name" value="RIBOSOMALL19"/>
</dbReference>
<dbReference type="SUPFAM" id="SSF50104">
    <property type="entry name" value="Translation proteins SH3-like domain"/>
    <property type="match status" value="1"/>
</dbReference>
<dbReference type="PROSITE" id="PS01015">
    <property type="entry name" value="RIBOSOMAL_L19"/>
    <property type="match status" value="1"/>
</dbReference>
<name>RL19_BRAHW</name>
<proteinExistence type="inferred from homology"/>
<evidence type="ECO:0000255" key="1">
    <source>
        <dbReference type="HAMAP-Rule" id="MF_00402"/>
    </source>
</evidence>
<evidence type="ECO:0000305" key="2"/>